<feature type="chain" id="PRO_0000191628" description="Prothymosin alpha-A">
    <location>
        <begin position="1"/>
        <end position="105"/>
    </location>
</feature>
<feature type="region of interest" description="Disordered" evidence="2">
    <location>
        <begin position="1"/>
        <end position="105"/>
    </location>
</feature>
<feature type="compositionally biased region" description="Basic and acidic residues" evidence="2">
    <location>
        <begin position="1"/>
        <end position="30"/>
    </location>
</feature>
<feature type="compositionally biased region" description="Acidic residues" evidence="2">
    <location>
        <begin position="39"/>
        <end position="78"/>
    </location>
</feature>
<feature type="compositionally biased region" description="Acidic residues" evidence="2">
    <location>
        <begin position="87"/>
        <end position="96"/>
    </location>
</feature>
<feature type="sequence conflict" description="In Ref. 1; AAM18634." evidence="4" ref="1">
    <original>SKE</original>
    <variation>NKD</variation>
    <location>
        <begin position="9"/>
        <end position="11"/>
    </location>
</feature>
<evidence type="ECO:0000250" key="1"/>
<evidence type="ECO:0000256" key="2">
    <source>
        <dbReference type="SAM" id="MobiDB-lite"/>
    </source>
</evidence>
<evidence type="ECO:0000269" key="3">
    <source>
    </source>
</evidence>
<evidence type="ECO:0000305" key="4"/>
<comment type="subcellular location">
    <subcellularLocation>
        <location evidence="1">Nucleus</location>
    </subcellularLocation>
</comment>
<comment type="tissue specificity">
    <text evidence="3">At the 20-somite stage (18 hpf), expressed on the dorsal side of the embryo in the developing central and peripheral nervous system (CNS and PNS), in the tail bud and the pronephric ducts. In the PNS, expressed in the otic vesicle, trigeminal ganglion and the anterior lateral line placode. Localized throughout the hindbrain, with highest expression in rhombomeres 3 and 4. In the head, expressed in the olfactory placode and in the diencephalic region. At the end of the segmentation period (20 hpf), expression begins in the newly forming endodermal pouches, and weakly in the pharyngeal arch precursor cells. During the early pharyngula period, expressed in the pectoral fin bud, the developing retina, and still present in the central nervous system and endodermal pouches. In the tail, expressed in the spinal cord and posterior lateral line precursors. Weakly expressed in the pronephric ducts, only in the corpuscles of Stanius. At 48 hpf, still expressed in the retina and brain, where expression is almost uniform. At this stage, expression is decreased in the spinal cord and is absent from the lateral line cells and pronephric ducts, but appears in the intestine and continues in the pharyngeal arches. In 72 hpf embryos, expression in the brain remains uniform but is restricted to amacrine cells in the retina. In the pharyngeal arches, expression continues to be limited to the ectodermal and endodermal covering cells.</text>
</comment>
<comment type="developmental stage">
    <text evidence="3">Expression begins at 16 hpf and gradually increases up to 72 hpf.</text>
</comment>
<comment type="similarity">
    <text evidence="4">Belongs to the pro/parathymosin family.</text>
</comment>
<proteinExistence type="evidence at transcript level"/>
<dbReference type="EMBL" id="BC068334">
    <property type="protein sequence ID" value="AAH68334.1"/>
    <property type="molecule type" value="mRNA"/>
</dbReference>
<dbReference type="EMBL" id="AF372502">
    <property type="protein sequence ID" value="AAM18634.1"/>
    <property type="molecule type" value="mRNA"/>
</dbReference>
<dbReference type="RefSeq" id="NP_919357.2">
    <property type="nucleotide sequence ID" value="NM_194376.2"/>
</dbReference>
<dbReference type="STRING" id="7955.ENSDARP00000009093"/>
<dbReference type="PaxDb" id="7955-ENSDARP00000009093"/>
<dbReference type="GeneID" id="335707"/>
<dbReference type="KEGG" id="dre:335707"/>
<dbReference type="AGR" id="ZFIN:ZDB-GENE-030131-7647"/>
<dbReference type="CTD" id="335707"/>
<dbReference type="ZFIN" id="ZDB-GENE-030131-7647">
    <property type="gene designation" value="ptmaa"/>
</dbReference>
<dbReference type="eggNOG" id="ENOG502S55T">
    <property type="taxonomic scope" value="Eukaryota"/>
</dbReference>
<dbReference type="InParanoid" id="Q6NV32"/>
<dbReference type="OrthoDB" id="8962891at2759"/>
<dbReference type="PRO" id="PR:Q6NV32"/>
<dbReference type="Proteomes" id="UP000000437">
    <property type="component" value="Alternate scaffold 6"/>
</dbReference>
<dbReference type="Proteomes" id="UP000000437">
    <property type="component" value="Chromosome 6"/>
</dbReference>
<dbReference type="GO" id="GO:0005634">
    <property type="term" value="C:nucleus"/>
    <property type="evidence" value="ECO:0000318"/>
    <property type="project" value="GO_Central"/>
</dbReference>
<dbReference type="GO" id="GO:0042393">
    <property type="term" value="F:histone binding"/>
    <property type="evidence" value="ECO:0000318"/>
    <property type="project" value="GO_Central"/>
</dbReference>
<dbReference type="GO" id="GO:0043066">
    <property type="term" value="P:negative regulation of apoptotic process"/>
    <property type="evidence" value="ECO:0000318"/>
    <property type="project" value="GO_Central"/>
</dbReference>
<dbReference type="GO" id="GO:0045944">
    <property type="term" value="P:positive regulation of transcription by RNA polymerase II"/>
    <property type="evidence" value="ECO:0000318"/>
    <property type="project" value="GO_Central"/>
</dbReference>
<dbReference type="InterPro" id="IPR004931">
    <property type="entry name" value="Pro/parathymosin"/>
</dbReference>
<dbReference type="PANTHER" id="PTHR22745">
    <property type="entry name" value="PROTHYMOSIN ALPHA"/>
    <property type="match status" value="1"/>
</dbReference>
<dbReference type="PANTHER" id="PTHR22745:SF0">
    <property type="entry name" value="PROTHYMOSIN ALPHA"/>
    <property type="match status" value="1"/>
</dbReference>
<dbReference type="Pfam" id="PF03247">
    <property type="entry name" value="Prothymosin"/>
    <property type="match status" value="1"/>
</dbReference>
<gene>
    <name type="primary">ptmaa</name>
    <name type="synonym">ptma</name>
    <name type="ORF">zgc:85633</name>
</gene>
<accession>Q6NV32</accession>
<accession>Q8QGP0</accession>
<protein>
    <recommendedName>
        <fullName>Prothymosin alpha-A</fullName>
    </recommendedName>
</protein>
<organism>
    <name type="scientific">Danio rerio</name>
    <name type="common">Zebrafish</name>
    <name type="synonym">Brachydanio rerio</name>
    <dbReference type="NCBI Taxonomy" id="7955"/>
    <lineage>
        <taxon>Eukaryota</taxon>
        <taxon>Metazoa</taxon>
        <taxon>Chordata</taxon>
        <taxon>Craniata</taxon>
        <taxon>Vertebrata</taxon>
        <taxon>Euteleostomi</taxon>
        <taxon>Actinopterygii</taxon>
        <taxon>Neopterygii</taxon>
        <taxon>Teleostei</taxon>
        <taxon>Ostariophysi</taxon>
        <taxon>Cypriniformes</taxon>
        <taxon>Danionidae</taxon>
        <taxon>Danioninae</taxon>
        <taxon>Danio</taxon>
    </lineage>
</organism>
<sequence>MADTKVDTSKEVSAKDLKEKKQVEEAENGKDAPANGNAENEENGDQENEVDEEDDDVAEEDEEDDGEGDDDDEDEEAEGGTGKRAAEDDDDDEDDVDPKKQKTDV</sequence>
<name>PTMAA_DANRE</name>
<reference key="1">
    <citation type="submission" date="2001-04" db="EMBL/GenBank/DDBJ databases">
        <title>A zebrafish prothymosin alpha-like protein selectively enhances proliferation of embryonic hematopoietic progenitor cells.</title>
        <authorList>
            <person name="Marty S.D."/>
            <person name="Huang H."/>
            <person name="Lin S."/>
        </authorList>
    </citation>
    <scope>NUCLEOTIDE SEQUENCE [MRNA]</scope>
</reference>
<reference key="2">
    <citation type="submission" date="2004-04" db="EMBL/GenBank/DDBJ databases">
        <authorList>
            <consortium name="NIH - Zebrafish Gene Collection (ZGC) project"/>
        </authorList>
    </citation>
    <scope>NUCLEOTIDE SEQUENCE [LARGE SCALE MRNA]</scope>
    <source>
        <tissue>Kidney</tissue>
    </source>
</reference>
<reference key="3">
    <citation type="journal article" date="2008" name="Dev. Dyn.">
        <title>Differential expression of duplicated genes for prothymosin alpha during zebrafish development.</title>
        <authorList>
            <person name="Donizetti A."/>
            <person name="Liccardo D."/>
            <person name="Esposito D."/>
            <person name="Del Gaudio R."/>
            <person name="Locascio A."/>
            <person name="Ferrara D."/>
            <person name="Minucci S."/>
            <person name="Aniello F."/>
        </authorList>
    </citation>
    <scope>IDENTIFICATION AS PTMAA</scope>
    <scope>TISSUE SPECIFICITY</scope>
    <scope>DEVELOPMENTAL STAGE</scope>
</reference>
<keyword id="KW-0539">Nucleus</keyword>
<keyword id="KW-1185">Reference proteome</keyword>